<sequence length="1126" mass="129380">MARPIFPNQQKIAEKLIILNDRGLGILTRIYNIKKACGDTKSKPGFLSEKSLESSIKFIVKRFPNIDVKGLNAIVNIKAEIIKSLSLYYHTFVDLLDFKDNVCELLTTMDACQIHLDITLNFELTKYYLDLVVTYVSLMIVLSRVEDRKAVLGLYNAAYELQNNQADTGFPRLGQMILDYEVPLKKLAEEFIPHQRLLTSALRSLTSIYALRNLPADKWREMQKLSLVGNPAILLKAVRTDTMSCEYISLEAMDRWIIFGLLLNHQMLGQYPEVNKIWLSALESSWVVALFRDEVLQIHQYIQATFDGIKGYSKRIGEVKEAYNTAVQKAALMHRERRKFLRTALKELALIMTDQPGLLGPKAIFIFIGLCLARDEILWLLRHNDNPPLLKNKGKSNEDLVDRQLPELLFHMEELRALVRKYSQVMQRYYVQYLSGFDATDLNIRMQSLQMCPEDESIIFSSLYNTAAALTVKQVEDNELFYFRPFRLDWFRLQTYMSVGKAALRIAEHAELARLLDSMVFHTRVVDNLDEILVETSDLSIFCFYNKMFDDQFHMCLEFPAQNRYIIAFPLICSHFQNCTHEMCPEERHHIRERSLSVVNIFLEEMAKEAKNIITTICDEQCTMADALLPKHCAKILSVQSARKKKDKSKSKHFDDIRKPGDESYRKTREDLTTMDKLHMALTELCFAINYCPTVNVWEFAFAPREYLCQNLEHRFSRDLVGMVMFNQETMEIAKPSELLASVRAYMNVLQTVENYVHIDITRVFNNCLLQQTQALDSHGEKTIAALYNTWYSEVLLRRVSAGNIVFSINQKAFVPISPEGWVPFNPQEFSDLNELRALAELVGPYGIKTLNETLMWHIANQVQELKSLVSTNKEVLITLRTSFDKPEVMKEQFKRLQDVDRVLQRMTIIGVIICFRNLVHEALVDVLDKRIPFLLSSVKDFQEHLPGGDQIRVASEMASAAGLLCKVDPTLATTLKSKKPEFDEGEHLTACLLMVFVAVSIPKLARNENSFYRATIDGHSNNTHCMAAAINNIFGALFTICGQSDMEDRMKEFLALASSSLLRLGQESDKEATRNRESIYLLLDEIVKQSPFLTMDLLESCFPYVLIRNAYHGVYKQEQILGLAL</sequence>
<name>HEM_DROME</name>
<gene>
    <name type="primary">Hem</name>
    <name type="synonym">HEM2</name>
    <name type="ORF">CG5837</name>
</gene>
<comment type="function">
    <text evidence="2">Plays a role during growth of the oocyte.</text>
</comment>
<comment type="subunit">
    <text>Component of the WAVE complex composed of Hem/Kette, Scar/Wave and Cyfip where it binds directly to the C-terminus of Cyfip.</text>
</comment>
<comment type="subcellular location">
    <subcellularLocation>
        <location evidence="3">Cell membrane</location>
        <topology evidence="3">Single-pass membrane protein</topology>
        <orientation evidence="3">Cytoplasmic side</orientation>
    </subcellularLocation>
</comment>
<comment type="developmental stage">
    <text evidence="2">Expressed maternally in the oocyte and shows uniform expression during the first half of embryogenesis, but becomes restricted to the brain and the nervous system during late embryogenesis.</text>
</comment>
<comment type="similarity">
    <text evidence="3">Belongs to the HEM-1/HEM-2 family.</text>
</comment>
<organism>
    <name type="scientific">Drosophila melanogaster</name>
    <name type="common">Fruit fly</name>
    <dbReference type="NCBI Taxonomy" id="7227"/>
    <lineage>
        <taxon>Eukaryota</taxon>
        <taxon>Metazoa</taxon>
        <taxon>Ecdysozoa</taxon>
        <taxon>Arthropoda</taxon>
        <taxon>Hexapoda</taxon>
        <taxon>Insecta</taxon>
        <taxon>Pterygota</taxon>
        <taxon>Neoptera</taxon>
        <taxon>Endopterygota</taxon>
        <taxon>Diptera</taxon>
        <taxon>Brachycera</taxon>
        <taxon>Muscomorpha</taxon>
        <taxon>Ephydroidea</taxon>
        <taxon>Drosophilidae</taxon>
        <taxon>Drosophila</taxon>
        <taxon>Sophophora</taxon>
    </lineage>
</organism>
<dbReference type="EMBL" id="X80028">
    <property type="protein sequence ID" value="CAA56332.1"/>
    <property type="molecule type" value="mRNA"/>
</dbReference>
<dbReference type="EMBL" id="AE014296">
    <property type="protein sequence ID" value="AAF51820.1"/>
    <property type="molecule type" value="Genomic_DNA"/>
</dbReference>
<dbReference type="EMBL" id="AY118579">
    <property type="protein sequence ID" value="AAM49948.1"/>
    <property type="molecule type" value="mRNA"/>
</dbReference>
<dbReference type="PIR" id="S57832">
    <property type="entry name" value="S49208"/>
</dbReference>
<dbReference type="RefSeq" id="NP_524214.1">
    <property type="nucleotide sequence ID" value="NM_079490.4"/>
</dbReference>
<dbReference type="SMR" id="P55162"/>
<dbReference type="BioGRID" id="65698">
    <property type="interactions" value="19"/>
</dbReference>
<dbReference type="ComplexPortal" id="CPX-2972">
    <property type="entry name" value="WAVE regulatory complex"/>
</dbReference>
<dbReference type="DIP" id="DIP-18694N"/>
<dbReference type="FunCoup" id="P55162">
    <property type="interactions" value="1559"/>
</dbReference>
<dbReference type="IntAct" id="P55162">
    <property type="interactions" value="9"/>
</dbReference>
<dbReference type="STRING" id="7227.FBpp0078162"/>
<dbReference type="iPTMnet" id="P55162"/>
<dbReference type="PaxDb" id="7227-FBpp0078162"/>
<dbReference type="EnsemblMetazoa" id="FBtr0078510">
    <property type="protein sequence ID" value="FBpp0078162"/>
    <property type="gene ID" value="FBgn0011771"/>
</dbReference>
<dbReference type="GeneID" id="40462"/>
<dbReference type="KEGG" id="dme:Dmel_CG5837"/>
<dbReference type="UCSC" id="CG5837-RA">
    <property type="organism name" value="d. melanogaster"/>
</dbReference>
<dbReference type="AGR" id="FB:FBgn0011771"/>
<dbReference type="CTD" id="40462"/>
<dbReference type="FlyBase" id="FBgn0011771">
    <property type="gene designation" value="Hem"/>
</dbReference>
<dbReference type="VEuPathDB" id="VectorBase:FBgn0011771"/>
<dbReference type="eggNOG" id="KOG1917">
    <property type="taxonomic scope" value="Eukaryota"/>
</dbReference>
<dbReference type="GeneTree" id="ENSGT00390000016619"/>
<dbReference type="HOGENOM" id="CLU_004450_0_0_1"/>
<dbReference type="InParanoid" id="P55162"/>
<dbReference type="OMA" id="INVWEYT"/>
<dbReference type="OrthoDB" id="548214at2759"/>
<dbReference type="PhylomeDB" id="P55162"/>
<dbReference type="Reactome" id="R-DME-2029482">
    <property type="pathway name" value="Regulation of actin dynamics for phagocytic cup formation"/>
</dbReference>
<dbReference type="Reactome" id="R-DME-4420097">
    <property type="pathway name" value="VEGFA-VEGFR2 Pathway"/>
</dbReference>
<dbReference type="Reactome" id="R-DME-5663213">
    <property type="pathway name" value="RHO GTPases Activate WASPs and WAVEs"/>
</dbReference>
<dbReference type="Reactome" id="R-DME-6798695">
    <property type="pathway name" value="Neutrophil degranulation"/>
</dbReference>
<dbReference type="Reactome" id="R-DME-9013149">
    <property type="pathway name" value="RAC1 GTPase cycle"/>
</dbReference>
<dbReference type="Reactome" id="R-DME-9013404">
    <property type="pathway name" value="RAC2 GTPase cycle"/>
</dbReference>
<dbReference type="Reactome" id="R-DME-9013423">
    <property type="pathway name" value="RAC3 GTPase cycle"/>
</dbReference>
<dbReference type="SignaLink" id="P55162"/>
<dbReference type="BioGRID-ORCS" id="40462">
    <property type="hits" value="0 hits in 3 CRISPR screens"/>
</dbReference>
<dbReference type="GenomeRNAi" id="40462"/>
<dbReference type="PRO" id="PR:P55162"/>
<dbReference type="Proteomes" id="UP000000803">
    <property type="component" value="Chromosome 3L"/>
</dbReference>
<dbReference type="Bgee" id="FBgn0011771">
    <property type="expression patterns" value="Expressed in embryonic/larval hemocyte (Drosophila) and 69 other cell types or tissues"/>
</dbReference>
<dbReference type="GO" id="GO:0031594">
    <property type="term" value="C:neuromuscular junction"/>
    <property type="evidence" value="ECO:0000314"/>
    <property type="project" value="SynGO"/>
</dbReference>
<dbReference type="GO" id="GO:0005886">
    <property type="term" value="C:plasma membrane"/>
    <property type="evidence" value="ECO:0007669"/>
    <property type="project" value="UniProtKB-SubCell"/>
</dbReference>
<dbReference type="GO" id="GO:0031209">
    <property type="term" value="C:SCAR complex"/>
    <property type="evidence" value="ECO:0000314"/>
    <property type="project" value="FlyBase"/>
</dbReference>
<dbReference type="GO" id="GO:0030036">
    <property type="term" value="P:actin cytoskeleton organization"/>
    <property type="evidence" value="ECO:0000315"/>
    <property type="project" value="FlyBase"/>
</dbReference>
<dbReference type="GO" id="GO:0007409">
    <property type="term" value="P:axonogenesis"/>
    <property type="evidence" value="ECO:0000315"/>
    <property type="project" value="FlyBase"/>
</dbReference>
<dbReference type="GO" id="GO:0033627">
    <property type="term" value="P:cell adhesion mediated by integrin"/>
    <property type="evidence" value="ECO:0000315"/>
    <property type="project" value="FlyBase"/>
</dbReference>
<dbReference type="GO" id="GO:0016477">
    <property type="term" value="P:cell migration"/>
    <property type="evidence" value="ECO:0000318"/>
    <property type="project" value="GO_Central"/>
</dbReference>
<dbReference type="GO" id="GO:0000902">
    <property type="term" value="P:cell morphogenesis"/>
    <property type="evidence" value="ECO:0000318"/>
    <property type="project" value="GO_Central"/>
</dbReference>
<dbReference type="GO" id="GO:0030031">
    <property type="term" value="P:cell projection assembly"/>
    <property type="evidence" value="ECO:0000315"/>
    <property type="project" value="FlyBase"/>
</dbReference>
<dbReference type="GO" id="GO:0007417">
    <property type="term" value="P:central nervous system development"/>
    <property type="evidence" value="ECO:0000315"/>
    <property type="project" value="FlyBase"/>
</dbReference>
<dbReference type="GO" id="GO:0008407">
    <property type="term" value="P:chaeta morphogenesis"/>
    <property type="evidence" value="ECO:0000315"/>
    <property type="project" value="FlyBase"/>
</dbReference>
<dbReference type="GO" id="GO:0030866">
    <property type="term" value="P:cortical actin cytoskeleton organization"/>
    <property type="evidence" value="ECO:0000315"/>
    <property type="project" value="FlyBase"/>
</dbReference>
<dbReference type="GO" id="GO:0007010">
    <property type="term" value="P:cytoskeleton organization"/>
    <property type="evidence" value="ECO:0000315"/>
    <property type="project" value="FlyBase"/>
</dbReference>
<dbReference type="GO" id="GO:0007520">
    <property type="term" value="P:myoblast fusion"/>
    <property type="evidence" value="ECO:0000315"/>
    <property type="project" value="FlyBase"/>
</dbReference>
<dbReference type="GO" id="GO:0007528">
    <property type="term" value="P:neuromuscular junction development"/>
    <property type="evidence" value="ECO:0000315"/>
    <property type="project" value="FlyBase"/>
</dbReference>
<dbReference type="GO" id="GO:0001764">
    <property type="term" value="P:neuron migration"/>
    <property type="evidence" value="ECO:0000315"/>
    <property type="project" value="FlyBase"/>
</dbReference>
<dbReference type="GO" id="GO:0048812">
    <property type="term" value="P:neuron projection morphogenesis"/>
    <property type="evidence" value="ECO:0000318"/>
    <property type="project" value="GO_Central"/>
</dbReference>
<dbReference type="GO" id="GO:0034315">
    <property type="term" value="P:regulation of Arp2/3 complex-mediated actin nucleation"/>
    <property type="evidence" value="ECO:0000314"/>
    <property type="project" value="ComplexPortal"/>
</dbReference>
<dbReference type="GO" id="GO:0008360">
    <property type="term" value="P:regulation of cell shape"/>
    <property type="evidence" value="ECO:0000315"/>
    <property type="project" value="FlyBase"/>
</dbReference>
<dbReference type="GO" id="GO:0050807">
    <property type="term" value="P:regulation of synapse organization"/>
    <property type="evidence" value="ECO:0000314"/>
    <property type="project" value="SynGO"/>
</dbReference>
<dbReference type="InterPro" id="IPR019137">
    <property type="entry name" value="Nck-associated_protein-1"/>
</dbReference>
<dbReference type="PANTHER" id="PTHR12093:SF10">
    <property type="entry name" value="MEMBRANE-ASSOCIATED PROTEIN HEM"/>
    <property type="match status" value="1"/>
</dbReference>
<dbReference type="PANTHER" id="PTHR12093">
    <property type="entry name" value="NCK-ASSOCIATED PROTEIN 1"/>
    <property type="match status" value="1"/>
</dbReference>
<dbReference type="Pfam" id="PF09735">
    <property type="entry name" value="Nckap1"/>
    <property type="match status" value="1"/>
</dbReference>
<feature type="chain" id="PRO_0000216176" description="Membrane-associated protein Hem">
    <location>
        <begin position="1"/>
        <end position="1126"/>
    </location>
</feature>
<feature type="transmembrane region" description="Helical" evidence="1">
    <location>
        <begin position="989"/>
        <end position="1006"/>
    </location>
</feature>
<reference key="1">
    <citation type="journal article" date="1995" name="J. Mol. Biol.">
        <title>The HEM proteins: a novel family of tissue-specific transmembrane proteins expressed from invertebrates through mammals with an essential function in oogenesis.</title>
        <authorList>
            <person name="Baumgartner S."/>
            <person name="Martin D."/>
            <person name="Chiquet-Ehrismann R."/>
            <person name="Sutton J."/>
            <person name="Desai A."/>
            <person name="Huang I."/>
            <person name="Kato K."/>
            <person name="Hromas R."/>
        </authorList>
    </citation>
    <scope>NUCLEOTIDE SEQUENCE [MRNA]</scope>
    <scope>FUNCTION</scope>
    <scope>DEVELOPMENTAL STAGE</scope>
    <source>
        <strain>Canton-S</strain>
    </source>
</reference>
<reference key="2">
    <citation type="journal article" date="2000" name="Science">
        <title>The genome sequence of Drosophila melanogaster.</title>
        <authorList>
            <person name="Adams M.D."/>
            <person name="Celniker S.E."/>
            <person name="Holt R.A."/>
            <person name="Evans C.A."/>
            <person name="Gocayne J.D."/>
            <person name="Amanatides P.G."/>
            <person name="Scherer S.E."/>
            <person name="Li P.W."/>
            <person name="Hoskins R.A."/>
            <person name="Galle R.F."/>
            <person name="George R.A."/>
            <person name="Lewis S.E."/>
            <person name="Richards S."/>
            <person name="Ashburner M."/>
            <person name="Henderson S.N."/>
            <person name="Sutton G.G."/>
            <person name="Wortman J.R."/>
            <person name="Yandell M.D."/>
            <person name="Zhang Q."/>
            <person name="Chen L.X."/>
            <person name="Brandon R.C."/>
            <person name="Rogers Y.-H.C."/>
            <person name="Blazej R.G."/>
            <person name="Champe M."/>
            <person name="Pfeiffer B.D."/>
            <person name="Wan K.H."/>
            <person name="Doyle C."/>
            <person name="Baxter E.G."/>
            <person name="Helt G."/>
            <person name="Nelson C.R."/>
            <person name="Miklos G.L.G."/>
            <person name="Abril J.F."/>
            <person name="Agbayani A."/>
            <person name="An H.-J."/>
            <person name="Andrews-Pfannkoch C."/>
            <person name="Baldwin D."/>
            <person name="Ballew R.M."/>
            <person name="Basu A."/>
            <person name="Baxendale J."/>
            <person name="Bayraktaroglu L."/>
            <person name="Beasley E.M."/>
            <person name="Beeson K.Y."/>
            <person name="Benos P.V."/>
            <person name="Berman B.P."/>
            <person name="Bhandari D."/>
            <person name="Bolshakov S."/>
            <person name="Borkova D."/>
            <person name="Botchan M.R."/>
            <person name="Bouck J."/>
            <person name="Brokstein P."/>
            <person name="Brottier P."/>
            <person name="Burtis K.C."/>
            <person name="Busam D.A."/>
            <person name="Butler H."/>
            <person name="Cadieu E."/>
            <person name="Center A."/>
            <person name="Chandra I."/>
            <person name="Cherry J.M."/>
            <person name="Cawley S."/>
            <person name="Dahlke C."/>
            <person name="Davenport L.B."/>
            <person name="Davies P."/>
            <person name="de Pablos B."/>
            <person name="Delcher A."/>
            <person name="Deng Z."/>
            <person name="Mays A.D."/>
            <person name="Dew I."/>
            <person name="Dietz S.M."/>
            <person name="Dodson K."/>
            <person name="Doup L.E."/>
            <person name="Downes M."/>
            <person name="Dugan-Rocha S."/>
            <person name="Dunkov B.C."/>
            <person name="Dunn P."/>
            <person name="Durbin K.J."/>
            <person name="Evangelista C.C."/>
            <person name="Ferraz C."/>
            <person name="Ferriera S."/>
            <person name="Fleischmann W."/>
            <person name="Fosler C."/>
            <person name="Gabrielian A.E."/>
            <person name="Garg N.S."/>
            <person name="Gelbart W.M."/>
            <person name="Glasser K."/>
            <person name="Glodek A."/>
            <person name="Gong F."/>
            <person name="Gorrell J.H."/>
            <person name="Gu Z."/>
            <person name="Guan P."/>
            <person name="Harris M."/>
            <person name="Harris N.L."/>
            <person name="Harvey D.A."/>
            <person name="Heiman T.J."/>
            <person name="Hernandez J.R."/>
            <person name="Houck J."/>
            <person name="Hostin D."/>
            <person name="Houston K.A."/>
            <person name="Howland T.J."/>
            <person name="Wei M.-H."/>
            <person name="Ibegwam C."/>
            <person name="Jalali M."/>
            <person name="Kalush F."/>
            <person name="Karpen G.H."/>
            <person name="Ke Z."/>
            <person name="Kennison J.A."/>
            <person name="Ketchum K.A."/>
            <person name="Kimmel B.E."/>
            <person name="Kodira C.D."/>
            <person name="Kraft C.L."/>
            <person name="Kravitz S."/>
            <person name="Kulp D."/>
            <person name="Lai Z."/>
            <person name="Lasko P."/>
            <person name="Lei Y."/>
            <person name="Levitsky A.A."/>
            <person name="Li J.H."/>
            <person name="Li Z."/>
            <person name="Liang Y."/>
            <person name="Lin X."/>
            <person name="Liu X."/>
            <person name="Mattei B."/>
            <person name="McIntosh T.C."/>
            <person name="McLeod M.P."/>
            <person name="McPherson D."/>
            <person name="Merkulov G."/>
            <person name="Milshina N.V."/>
            <person name="Mobarry C."/>
            <person name="Morris J."/>
            <person name="Moshrefi A."/>
            <person name="Mount S.M."/>
            <person name="Moy M."/>
            <person name="Murphy B."/>
            <person name="Murphy L."/>
            <person name="Muzny D.M."/>
            <person name="Nelson D.L."/>
            <person name="Nelson D.R."/>
            <person name="Nelson K.A."/>
            <person name="Nixon K."/>
            <person name="Nusskern D.R."/>
            <person name="Pacleb J.M."/>
            <person name="Palazzolo M."/>
            <person name="Pittman G.S."/>
            <person name="Pan S."/>
            <person name="Pollard J."/>
            <person name="Puri V."/>
            <person name="Reese M.G."/>
            <person name="Reinert K."/>
            <person name="Remington K."/>
            <person name="Saunders R.D.C."/>
            <person name="Scheeler F."/>
            <person name="Shen H."/>
            <person name="Shue B.C."/>
            <person name="Siden-Kiamos I."/>
            <person name="Simpson M."/>
            <person name="Skupski M.P."/>
            <person name="Smith T.J."/>
            <person name="Spier E."/>
            <person name="Spradling A.C."/>
            <person name="Stapleton M."/>
            <person name="Strong R."/>
            <person name="Sun E."/>
            <person name="Svirskas R."/>
            <person name="Tector C."/>
            <person name="Turner R."/>
            <person name="Venter E."/>
            <person name="Wang A.H."/>
            <person name="Wang X."/>
            <person name="Wang Z.-Y."/>
            <person name="Wassarman D.A."/>
            <person name="Weinstock G.M."/>
            <person name="Weissenbach J."/>
            <person name="Williams S.M."/>
            <person name="Woodage T."/>
            <person name="Worley K.C."/>
            <person name="Wu D."/>
            <person name="Yang S."/>
            <person name="Yao Q.A."/>
            <person name="Ye J."/>
            <person name="Yeh R.-F."/>
            <person name="Zaveri J.S."/>
            <person name="Zhan M."/>
            <person name="Zhang G."/>
            <person name="Zhao Q."/>
            <person name="Zheng L."/>
            <person name="Zheng X.H."/>
            <person name="Zhong F.N."/>
            <person name="Zhong W."/>
            <person name="Zhou X."/>
            <person name="Zhu S.C."/>
            <person name="Zhu X."/>
            <person name="Smith H.O."/>
            <person name="Gibbs R.A."/>
            <person name="Myers E.W."/>
            <person name="Rubin G.M."/>
            <person name="Venter J.C."/>
        </authorList>
    </citation>
    <scope>NUCLEOTIDE SEQUENCE [LARGE SCALE GENOMIC DNA]</scope>
    <source>
        <strain>Berkeley</strain>
    </source>
</reference>
<reference key="3">
    <citation type="journal article" date="2002" name="Genome Biol.">
        <title>Annotation of the Drosophila melanogaster euchromatic genome: a systematic review.</title>
        <authorList>
            <person name="Misra S."/>
            <person name="Crosby M.A."/>
            <person name="Mungall C.J."/>
            <person name="Matthews B.B."/>
            <person name="Campbell K.S."/>
            <person name="Hradecky P."/>
            <person name="Huang Y."/>
            <person name="Kaminker J.S."/>
            <person name="Millburn G.H."/>
            <person name="Prochnik S.E."/>
            <person name="Smith C.D."/>
            <person name="Tupy J.L."/>
            <person name="Whitfield E.J."/>
            <person name="Bayraktaroglu L."/>
            <person name="Berman B.P."/>
            <person name="Bettencourt B.R."/>
            <person name="Celniker S.E."/>
            <person name="de Grey A.D.N.J."/>
            <person name="Drysdale R.A."/>
            <person name="Harris N.L."/>
            <person name="Richter J."/>
            <person name="Russo S."/>
            <person name="Schroeder A.J."/>
            <person name="Shu S.Q."/>
            <person name="Stapleton M."/>
            <person name="Yamada C."/>
            <person name="Ashburner M."/>
            <person name="Gelbart W.M."/>
            <person name="Rubin G.M."/>
            <person name="Lewis S.E."/>
        </authorList>
    </citation>
    <scope>GENOME REANNOTATION</scope>
    <source>
        <strain>Berkeley</strain>
    </source>
</reference>
<reference key="4">
    <citation type="journal article" date="2002" name="Genome Biol.">
        <title>A Drosophila full-length cDNA resource.</title>
        <authorList>
            <person name="Stapleton M."/>
            <person name="Carlson J.W."/>
            <person name="Brokstein P."/>
            <person name="Yu C."/>
            <person name="Champe M."/>
            <person name="George R.A."/>
            <person name="Guarin H."/>
            <person name="Kronmiller B."/>
            <person name="Pacleb J.M."/>
            <person name="Park S."/>
            <person name="Wan K.H."/>
            <person name="Rubin G.M."/>
            <person name="Celniker S.E."/>
        </authorList>
    </citation>
    <scope>NUCLEOTIDE SEQUENCE [LARGE SCALE MRNA]</scope>
    <source>
        <strain>Berkeley</strain>
        <tissue>Embryo</tissue>
    </source>
</reference>
<reference key="5">
    <citation type="journal article" date="2004" name="Dev. Biol.">
        <title>WAVE/SCAR, a multifunctional complex coordinating different aspects of neuronal connectivity.</title>
        <authorList>
            <person name="Schenck A."/>
            <person name="Qurashi A."/>
            <person name="Carrera P."/>
            <person name="Bardoni B."/>
            <person name="Diebold C."/>
            <person name="Schejter E."/>
            <person name="Mandel J.-L."/>
            <person name="Giangrande A."/>
        </authorList>
    </citation>
    <scope>COMPONENT OF WAVE COMPLEX</scope>
</reference>
<evidence type="ECO:0000255" key="1"/>
<evidence type="ECO:0000269" key="2">
    <source>
    </source>
</evidence>
<evidence type="ECO:0000305" key="3"/>
<accession>P55162</accession>
<accession>Q540Y5</accession>
<accession>Q9VNU8</accession>
<proteinExistence type="evidence at transcript level"/>
<protein>
    <recommendedName>
        <fullName>Membrane-associated protein Hem</fullName>
    </recommendedName>
    <alternativeName>
        <fullName>dHem-2</fullName>
    </alternativeName>
</protein>
<keyword id="KW-1003">Cell membrane</keyword>
<keyword id="KW-0472">Membrane</keyword>
<keyword id="KW-1185">Reference proteome</keyword>
<keyword id="KW-0812">Transmembrane</keyword>
<keyword id="KW-1133">Transmembrane helix</keyword>